<evidence type="ECO:0000255" key="1">
    <source>
        <dbReference type="HAMAP-Rule" id="MF_00159"/>
    </source>
</evidence>
<name>ISPG_DEHMB</name>
<dbReference type="EC" id="1.17.7.3" evidence="1"/>
<dbReference type="EMBL" id="CP000688">
    <property type="protein sequence ID" value="ABQ16936.1"/>
    <property type="molecule type" value="Genomic_DNA"/>
</dbReference>
<dbReference type="SMR" id="A5FS85"/>
<dbReference type="KEGG" id="deb:DehaBAV1_0351"/>
<dbReference type="PATRIC" id="fig|216389.18.peg.390"/>
<dbReference type="HOGENOM" id="CLU_042258_0_0_0"/>
<dbReference type="UniPathway" id="UPA00056">
    <property type="reaction ID" value="UER00096"/>
</dbReference>
<dbReference type="GO" id="GO:0051539">
    <property type="term" value="F:4 iron, 4 sulfur cluster binding"/>
    <property type="evidence" value="ECO:0007669"/>
    <property type="project" value="UniProtKB-UniRule"/>
</dbReference>
<dbReference type="GO" id="GO:0046429">
    <property type="term" value="F:4-hydroxy-3-methylbut-2-en-1-yl diphosphate synthase activity (ferredoxin)"/>
    <property type="evidence" value="ECO:0007669"/>
    <property type="project" value="UniProtKB-UniRule"/>
</dbReference>
<dbReference type="GO" id="GO:0141197">
    <property type="term" value="F:4-hydroxy-3-methylbut-2-enyl-diphosphate synthase activity (flavodoxin)"/>
    <property type="evidence" value="ECO:0007669"/>
    <property type="project" value="UniProtKB-EC"/>
</dbReference>
<dbReference type="GO" id="GO:0005506">
    <property type="term" value="F:iron ion binding"/>
    <property type="evidence" value="ECO:0007669"/>
    <property type="project" value="InterPro"/>
</dbReference>
<dbReference type="GO" id="GO:0019288">
    <property type="term" value="P:isopentenyl diphosphate biosynthetic process, methylerythritol 4-phosphate pathway"/>
    <property type="evidence" value="ECO:0007669"/>
    <property type="project" value="UniProtKB-UniRule"/>
</dbReference>
<dbReference type="GO" id="GO:0016114">
    <property type="term" value="P:terpenoid biosynthetic process"/>
    <property type="evidence" value="ECO:0007669"/>
    <property type="project" value="InterPro"/>
</dbReference>
<dbReference type="FunFam" id="3.20.20.20:FF:000001">
    <property type="entry name" value="4-hydroxy-3-methylbut-2-en-1-yl diphosphate synthase (flavodoxin)"/>
    <property type="match status" value="1"/>
</dbReference>
<dbReference type="Gene3D" id="3.20.20.20">
    <property type="entry name" value="Dihydropteroate synthase-like"/>
    <property type="match status" value="1"/>
</dbReference>
<dbReference type="Gene3D" id="3.30.413.10">
    <property type="entry name" value="Sulfite Reductase Hemoprotein, domain 1"/>
    <property type="match status" value="1"/>
</dbReference>
<dbReference type="HAMAP" id="MF_00159">
    <property type="entry name" value="IspG"/>
    <property type="match status" value="1"/>
</dbReference>
<dbReference type="InterPro" id="IPR011005">
    <property type="entry name" value="Dihydropteroate_synth-like_sf"/>
</dbReference>
<dbReference type="InterPro" id="IPR016425">
    <property type="entry name" value="IspG_bac"/>
</dbReference>
<dbReference type="InterPro" id="IPR004588">
    <property type="entry name" value="IspG_bac-typ"/>
</dbReference>
<dbReference type="InterPro" id="IPR045854">
    <property type="entry name" value="NO2/SO3_Rdtase_4Fe4S_sf"/>
</dbReference>
<dbReference type="InterPro" id="IPR011060">
    <property type="entry name" value="RibuloseP-bd_barrel"/>
</dbReference>
<dbReference type="NCBIfam" id="TIGR00612">
    <property type="entry name" value="ispG_gcpE"/>
    <property type="match status" value="1"/>
</dbReference>
<dbReference type="NCBIfam" id="NF001540">
    <property type="entry name" value="PRK00366.1"/>
    <property type="match status" value="1"/>
</dbReference>
<dbReference type="PANTHER" id="PTHR30454">
    <property type="entry name" value="4-HYDROXY-3-METHYLBUT-2-EN-1-YL DIPHOSPHATE SYNTHASE"/>
    <property type="match status" value="1"/>
</dbReference>
<dbReference type="PANTHER" id="PTHR30454:SF0">
    <property type="entry name" value="4-HYDROXY-3-METHYLBUT-2-EN-1-YL DIPHOSPHATE SYNTHASE (FERREDOXIN), CHLOROPLASTIC"/>
    <property type="match status" value="1"/>
</dbReference>
<dbReference type="Pfam" id="PF04551">
    <property type="entry name" value="GcpE"/>
    <property type="match status" value="1"/>
</dbReference>
<dbReference type="PIRSF" id="PIRSF004640">
    <property type="entry name" value="IspG"/>
    <property type="match status" value="1"/>
</dbReference>
<dbReference type="SUPFAM" id="SSF56014">
    <property type="entry name" value="Nitrite and sulphite reductase 4Fe-4S domain-like"/>
    <property type="match status" value="1"/>
</dbReference>
<dbReference type="SUPFAM" id="SSF51366">
    <property type="entry name" value="Ribulose-phoshate binding barrel"/>
    <property type="match status" value="1"/>
</dbReference>
<reference key="1">
    <citation type="submission" date="2007-05" db="EMBL/GenBank/DDBJ databases">
        <title>Complete sequence of Dehalococcoides sp. BAV1.</title>
        <authorList>
            <consortium name="US DOE Joint Genome Institute"/>
            <person name="Copeland A."/>
            <person name="Lucas S."/>
            <person name="Lapidus A."/>
            <person name="Barry K."/>
            <person name="Detter J.C."/>
            <person name="Glavina del Rio T."/>
            <person name="Hammon N."/>
            <person name="Israni S."/>
            <person name="Pitluck S."/>
            <person name="Lowry S."/>
            <person name="Clum A."/>
            <person name="Schmutz J."/>
            <person name="Larimer F."/>
            <person name="Land M."/>
            <person name="Hauser L."/>
            <person name="Kyrpides N."/>
            <person name="Kim E."/>
            <person name="Ritalahti K.M."/>
            <person name="Loeffler F."/>
            <person name="Richardson P."/>
        </authorList>
    </citation>
    <scope>NUCLEOTIDE SEQUENCE [LARGE SCALE GENOMIC DNA]</scope>
    <source>
        <strain>ATCC BAA-2100 / JCM 16839 / KCTC 5957 / BAV1</strain>
    </source>
</reference>
<proteinExistence type="inferred from homology"/>
<accession>A5FS85</accession>
<gene>
    <name evidence="1" type="primary">ispG</name>
    <name type="ordered locus">DehaBAV1_0351</name>
</gene>
<keyword id="KW-0004">4Fe-4S</keyword>
<keyword id="KW-0408">Iron</keyword>
<keyword id="KW-0411">Iron-sulfur</keyword>
<keyword id="KW-0414">Isoprene biosynthesis</keyword>
<keyword id="KW-0479">Metal-binding</keyword>
<keyword id="KW-0560">Oxidoreductase</keyword>
<comment type="function">
    <text evidence="1">Converts 2C-methyl-D-erythritol 2,4-cyclodiphosphate (ME-2,4cPP) into 1-hydroxy-2-methyl-2-(E)-butenyl 4-diphosphate.</text>
</comment>
<comment type="catalytic activity">
    <reaction evidence="1">
        <text>(2E)-4-hydroxy-3-methylbut-2-enyl diphosphate + oxidized [flavodoxin] + H2O + 2 H(+) = 2-C-methyl-D-erythritol 2,4-cyclic diphosphate + reduced [flavodoxin]</text>
        <dbReference type="Rhea" id="RHEA:43604"/>
        <dbReference type="Rhea" id="RHEA-COMP:10622"/>
        <dbReference type="Rhea" id="RHEA-COMP:10623"/>
        <dbReference type="ChEBI" id="CHEBI:15377"/>
        <dbReference type="ChEBI" id="CHEBI:15378"/>
        <dbReference type="ChEBI" id="CHEBI:57618"/>
        <dbReference type="ChEBI" id="CHEBI:58210"/>
        <dbReference type="ChEBI" id="CHEBI:58483"/>
        <dbReference type="ChEBI" id="CHEBI:128753"/>
        <dbReference type="EC" id="1.17.7.3"/>
    </reaction>
</comment>
<comment type="cofactor">
    <cofactor evidence="1">
        <name>[4Fe-4S] cluster</name>
        <dbReference type="ChEBI" id="CHEBI:49883"/>
    </cofactor>
    <text evidence="1">Binds 1 [4Fe-4S] cluster.</text>
</comment>
<comment type="pathway">
    <text evidence="1">Isoprenoid biosynthesis; isopentenyl diphosphate biosynthesis via DXP pathway; isopentenyl diphosphate from 1-deoxy-D-xylulose 5-phosphate: step 5/6.</text>
</comment>
<comment type="similarity">
    <text evidence="1">Belongs to the IspG family.</text>
</comment>
<feature type="chain" id="PRO_1000076882" description="4-hydroxy-3-methylbut-2-en-1-yl diphosphate synthase (flavodoxin)">
    <location>
        <begin position="1"/>
        <end position="348"/>
    </location>
</feature>
<feature type="binding site" evidence="1">
    <location>
        <position position="263"/>
    </location>
    <ligand>
        <name>[4Fe-4S] cluster</name>
        <dbReference type="ChEBI" id="CHEBI:49883"/>
    </ligand>
</feature>
<feature type="binding site" evidence="1">
    <location>
        <position position="266"/>
    </location>
    <ligand>
        <name>[4Fe-4S] cluster</name>
        <dbReference type="ChEBI" id="CHEBI:49883"/>
    </ligand>
</feature>
<feature type="binding site" evidence="1">
    <location>
        <position position="298"/>
    </location>
    <ligand>
        <name>[4Fe-4S] cluster</name>
        <dbReference type="ChEBI" id="CHEBI:49883"/>
    </ligand>
</feature>
<feature type="binding site" evidence="1">
    <location>
        <position position="305"/>
    </location>
    <ligand>
        <name>[4Fe-4S] cluster</name>
        <dbReference type="ChEBI" id="CHEBI:49883"/>
    </ligand>
</feature>
<protein>
    <recommendedName>
        <fullName evidence="1">4-hydroxy-3-methylbut-2-en-1-yl diphosphate synthase (flavodoxin)</fullName>
        <ecNumber evidence="1">1.17.7.3</ecNumber>
    </recommendedName>
    <alternativeName>
        <fullName evidence="1">1-hydroxy-2-methyl-2-(E)-butenyl 4-diphosphate synthase</fullName>
    </alternativeName>
</protein>
<organism>
    <name type="scientific">Dehalococcoides mccartyi (strain ATCC BAA-2100 / JCM 16839 / KCTC 5957 / BAV1)</name>
    <dbReference type="NCBI Taxonomy" id="216389"/>
    <lineage>
        <taxon>Bacteria</taxon>
        <taxon>Bacillati</taxon>
        <taxon>Chloroflexota</taxon>
        <taxon>Dehalococcoidia</taxon>
        <taxon>Dehalococcoidales</taxon>
        <taxon>Dehalococcoidaceae</taxon>
        <taxon>Dehalococcoides</taxon>
    </lineage>
</organism>
<sequence length="348" mass="37126">MITRRQSTEIRLGNLTIGGSAPISVQSMTKTDTRNIPATIAQIKELEECGCEIIRLAIPDMEAASALKSIRPKVKIPIVADIHFDYRLALASLSAGVDGLRLNPGNIGDPERVKAVVKSAKEREIPIRIGVNAGSLPKDLPPELTIAQKMVKAAMGHIKILEGLDFGLIKVSLKAFDVPTTIEAYTQIASLIPYPLHVGITETGTPKTGLVRSAVGIGNLLYMGIGDTIRVSLTAPPHEEVFAAYEILKSLNLRQRGPILVSCPTCSRTEVDIVGIASQVQEALNKIDKPIRVAVMGCAVNGPGEAKEADLGIACGKGQGLLFRKGEKIAVVPEDELVDALLREIASL</sequence>